<dbReference type="EC" id="2.4.2.17" evidence="1"/>
<dbReference type="EMBL" id="CP000103">
    <property type="protein sequence ID" value="ABB74127.1"/>
    <property type="molecule type" value="Genomic_DNA"/>
</dbReference>
<dbReference type="RefSeq" id="WP_011380175.1">
    <property type="nucleotide sequence ID" value="NC_007614.1"/>
</dbReference>
<dbReference type="SMR" id="Q2YAU4"/>
<dbReference type="STRING" id="323848.Nmul_A0820"/>
<dbReference type="KEGG" id="nmu:Nmul_A0820"/>
<dbReference type="eggNOG" id="COG0040">
    <property type="taxonomic scope" value="Bacteria"/>
</dbReference>
<dbReference type="HOGENOM" id="CLU_038115_2_0_4"/>
<dbReference type="OrthoDB" id="9801867at2"/>
<dbReference type="UniPathway" id="UPA00031">
    <property type="reaction ID" value="UER00006"/>
</dbReference>
<dbReference type="Proteomes" id="UP000002718">
    <property type="component" value="Chromosome"/>
</dbReference>
<dbReference type="GO" id="GO:0005737">
    <property type="term" value="C:cytoplasm"/>
    <property type="evidence" value="ECO:0007669"/>
    <property type="project" value="UniProtKB-SubCell"/>
</dbReference>
<dbReference type="GO" id="GO:0005524">
    <property type="term" value="F:ATP binding"/>
    <property type="evidence" value="ECO:0007669"/>
    <property type="project" value="UniProtKB-KW"/>
</dbReference>
<dbReference type="GO" id="GO:0003879">
    <property type="term" value="F:ATP phosphoribosyltransferase activity"/>
    <property type="evidence" value="ECO:0007669"/>
    <property type="project" value="UniProtKB-UniRule"/>
</dbReference>
<dbReference type="GO" id="GO:0000105">
    <property type="term" value="P:L-histidine biosynthetic process"/>
    <property type="evidence" value="ECO:0007669"/>
    <property type="project" value="UniProtKB-UniRule"/>
</dbReference>
<dbReference type="CDD" id="cd13595">
    <property type="entry name" value="PBP2_HisGs"/>
    <property type="match status" value="1"/>
</dbReference>
<dbReference type="FunFam" id="3.40.190.10:FF:000011">
    <property type="entry name" value="ATP phosphoribosyltransferase"/>
    <property type="match status" value="1"/>
</dbReference>
<dbReference type="Gene3D" id="3.40.190.10">
    <property type="entry name" value="Periplasmic binding protein-like II"/>
    <property type="match status" value="2"/>
</dbReference>
<dbReference type="HAMAP" id="MF_01018">
    <property type="entry name" value="HisG_Short"/>
    <property type="match status" value="1"/>
</dbReference>
<dbReference type="InterPro" id="IPR013820">
    <property type="entry name" value="ATP_PRibTrfase_cat"/>
</dbReference>
<dbReference type="InterPro" id="IPR018198">
    <property type="entry name" value="ATP_PRibTrfase_CS"/>
</dbReference>
<dbReference type="InterPro" id="IPR001348">
    <property type="entry name" value="ATP_PRibTrfase_HisG"/>
</dbReference>
<dbReference type="InterPro" id="IPR024893">
    <property type="entry name" value="ATP_PRibTrfase_HisG_short"/>
</dbReference>
<dbReference type="NCBIfam" id="TIGR00070">
    <property type="entry name" value="hisG"/>
    <property type="match status" value="1"/>
</dbReference>
<dbReference type="PANTHER" id="PTHR21403:SF8">
    <property type="entry name" value="ATP PHOSPHORIBOSYLTRANSFERASE"/>
    <property type="match status" value="1"/>
</dbReference>
<dbReference type="PANTHER" id="PTHR21403">
    <property type="entry name" value="ATP PHOSPHORIBOSYLTRANSFERASE ATP-PRTASE"/>
    <property type="match status" value="1"/>
</dbReference>
<dbReference type="Pfam" id="PF01634">
    <property type="entry name" value="HisG"/>
    <property type="match status" value="1"/>
</dbReference>
<dbReference type="SUPFAM" id="SSF53850">
    <property type="entry name" value="Periplasmic binding protein-like II"/>
    <property type="match status" value="1"/>
</dbReference>
<dbReference type="PROSITE" id="PS01316">
    <property type="entry name" value="ATP_P_PHORIBOSYLTR"/>
    <property type="match status" value="1"/>
</dbReference>
<proteinExistence type="inferred from homology"/>
<gene>
    <name evidence="1" type="primary">hisG</name>
    <name type="ordered locus">Nmul_A0820</name>
</gene>
<accession>Q2YAU4</accession>
<reference key="1">
    <citation type="submission" date="2005-08" db="EMBL/GenBank/DDBJ databases">
        <title>Complete sequence of chromosome 1 of Nitrosospira multiformis ATCC 25196.</title>
        <authorList>
            <person name="Copeland A."/>
            <person name="Lucas S."/>
            <person name="Lapidus A."/>
            <person name="Barry K."/>
            <person name="Detter J.C."/>
            <person name="Glavina T."/>
            <person name="Hammon N."/>
            <person name="Israni S."/>
            <person name="Pitluck S."/>
            <person name="Chain P."/>
            <person name="Malfatti S."/>
            <person name="Shin M."/>
            <person name="Vergez L."/>
            <person name="Schmutz J."/>
            <person name="Larimer F."/>
            <person name="Land M."/>
            <person name="Hauser L."/>
            <person name="Kyrpides N."/>
            <person name="Lykidis A."/>
            <person name="Richardson P."/>
        </authorList>
    </citation>
    <scope>NUCLEOTIDE SEQUENCE [LARGE SCALE GENOMIC DNA]</scope>
    <source>
        <strain>ATCC 25196 / NCIMB 11849 / C 71</strain>
    </source>
</reference>
<comment type="function">
    <text evidence="1">Catalyzes the condensation of ATP and 5-phosphoribose 1-diphosphate to form N'-(5'-phosphoribosyl)-ATP (PR-ATP). Has a crucial role in the pathway because the rate of histidine biosynthesis seems to be controlled primarily by regulation of HisG enzymatic activity.</text>
</comment>
<comment type="catalytic activity">
    <reaction evidence="1">
        <text>1-(5-phospho-beta-D-ribosyl)-ATP + diphosphate = 5-phospho-alpha-D-ribose 1-diphosphate + ATP</text>
        <dbReference type="Rhea" id="RHEA:18473"/>
        <dbReference type="ChEBI" id="CHEBI:30616"/>
        <dbReference type="ChEBI" id="CHEBI:33019"/>
        <dbReference type="ChEBI" id="CHEBI:58017"/>
        <dbReference type="ChEBI" id="CHEBI:73183"/>
        <dbReference type="EC" id="2.4.2.17"/>
    </reaction>
</comment>
<comment type="pathway">
    <text evidence="1">Amino-acid biosynthesis; L-histidine biosynthesis; L-histidine from 5-phospho-alpha-D-ribose 1-diphosphate: step 1/9.</text>
</comment>
<comment type="subunit">
    <text evidence="1">Heteromultimer composed of HisG and HisZ subunits.</text>
</comment>
<comment type="subcellular location">
    <subcellularLocation>
        <location evidence="1">Cytoplasm</location>
    </subcellularLocation>
</comment>
<comment type="domain">
    <text>Lacks the C-terminal regulatory region which is replaced by HisZ.</text>
</comment>
<comment type="similarity">
    <text evidence="1">Belongs to the ATP phosphoribosyltransferase family. Short subfamily.</text>
</comment>
<evidence type="ECO:0000255" key="1">
    <source>
        <dbReference type="HAMAP-Rule" id="MF_01018"/>
    </source>
</evidence>
<feature type="chain" id="PRO_0000229322" description="ATP phosphoribosyltransferase">
    <location>
        <begin position="1"/>
        <end position="227"/>
    </location>
</feature>
<protein>
    <recommendedName>
        <fullName evidence="1">ATP phosphoribosyltransferase</fullName>
        <shortName evidence="1">ATP-PRT</shortName>
        <shortName evidence="1">ATP-PRTase</shortName>
        <ecNumber evidence="1">2.4.2.17</ecNumber>
    </recommendedName>
</protein>
<sequence>MTSITIALSKGRIFDDTAPLLKAAGIIPLDDPETSRKLILATNRDDVRLIIVRASDVPTYVQYGAADMGIAGKDVLLEHGGAGLYQPLDLNIARCRMMVAVRSDFDYESAVRRGARVRVATKYLQTAREHFAEKGMHVDLIKLYGSMELAPLVGLADAIVDLVSSGNTLKANNLKAVEEIMPISSRLIINQAALKLKRRAIQPMLEAFSAAITPLTPLSPYPLGATP</sequence>
<keyword id="KW-0028">Amino-acid biosynthesis</keyword>
<keyword id="KW-0067">ATP-binding</keyword>
<keyword id="KW-0963">Cytoplasm</keyword>
<keyword id="KW-0328">Glycosyltransferase</keyword>
<keyword id="KW-0368">Histidine biosynthesis</keyword>
<keyword id="KW-0547">Nucleotide-binding</keyword>
<keyword id="KW-1185">Reference proteome</keyword>
<keyword id="KW-0808">Transferase</keyword>
<name>HIS1_NITMU</name>
<organism>
    <name type="scientific">Nitrosospira multiformis (strain ATCC 25196 / NCIMB 11849 / C 71)</name>
    <dbReference type="NCBI Taxonomy" id="323848"/>
    <lineage>
        <taxon>Bacteria</taxon>
        <taxon>Pseudomonadati</taxon>
        <taxon>Pseudomonadota</taxon>
        <taxon>Betaproteobacteria</taxon>
        <taxon>Nitrosomonadales</taxon>
        <taxon>Nitrosomonadaceae</taxon>
        <taxon>Nitrosospira</taxon>
    </lineage>
</organism>